<comment type="function">
    <text evidence="1">Assembles around the rod to form the L-ring and probably protects the motor/basal body from shearing forces during rotation.</text>
</comment>
<comment type="subunit">
    <text evidence="1">The basal body constitutes a major portion of the flagellar organelle and consists of four rings (L,P,S, and M) mounted on a central rod.</text>
</comment>
<comment type="subcellular location">
    <subcellularLocation>
        <location evidence="1">Periplasm</location>
    </subcellularLocation>
    <subcellularLocation>
        <location evidence="1">Bacterial flagellum basal body</location>
    </subcellularLocation>
</comment>
<comment type="similarity">
    <text evidence="1">Belongs to the FlgI family.</text>
</comment>
<feature type="signal peptide" evidence="1">
    <location>
        <begin position="1"/>
        <end position="16"/>
    </location>
</feature>
<feature type="chain" id="PRO_1000050106" description="Flagellar P-ring protein">
    <location>
        <begin position="17"/>
        <end position="348"/>
    </location>
</feature>
<protein>
    <recommendedName>
        <fullName evidence="1">Flagellar P-ring protein</fullName>
    </recommendedName>
    <alternativeName>
        <fullName evidence="1">Basal body P-ring protein</fullName>
    </alternativeName>
</protein>
<gene>
    <name evidence="1" type="primary">flgI</name>
    <name type="ordered locus">JJD26997_1810</name>
</gene>
<reference key="1">
    <citation type="submission" date="2007-07" db="EMBL/GenBank/DDBJ databases">
        <title>Complete genome sequence of Campylobacter jejuni subsp doylei 269.97 isolated from human blood.</title>
        <authorList>
            <person name="Fouts D.E."/>
            <person name="Mongodin E.F."/>
            <person name="Puiu D."/>
            <person name="Sebastian Y."/>
            <person name="Miller W.G."/>
            <person name="Mandrell R.E."/>
            <person name="Lastovica A.J."/>
            <person name="Nelson K.E."/>
        </authorList>
    </citation>
    <scope>NUCLEOTIDE SEQUENCE [LARGE SCALE GENOMIC DNA]</scope>
    <source>
        <strain>ATCC BAA-1458 / RM4099 / 269.97</strain>
    </source>
</reference>
<sequence>MRVLTIFLLFMTSIFAVQIKDVANTVGVRDNQLIGYGLVVGLNGSGDGTSSKFTLQSISNLLQGMNIKVDPNDIKSKNTAAVMVTAKLPAFAKSGDKLDITVSSMGDAKSLQGGTLLLTALRGIDGEIYAIAQGSISTGGLTPRPGGAGSHSTAATVMGGANVEREIPQNFSQNNDLTLSLKVADFKTANDIERVLNTVFGEEVAKAIDSRTVKLKKPEDLSNVDFMARVLEQDIAYKPQSKVIIDERTGTVIAGVDVEVEPVLITHKDITIKIDPNNNAVANQNEIDMKDGGFVDSSSNTLRINNAKSTVANIARMLNKLGATPNDIIAIMENLKRAGAINADLEII</sequence>
<accession>A7H5I4</accession>
<evidence type="ECO:0000255" key="1">
    <source>
        <dbReference type="HAMAP-Rule" id="MF_00416"/>
    </source>
</evidence>
<name>FLGI_CAMJD</name>
<keyword id="KW-0975">Bacterial flagellum</keyword>
<keyword id="KW-0574">Periplasm</keyword>
<keyword id="KW-0732">Signal</keyword>
<dbReference type="EMBL" id="CP000768">
    <property type="protein sequence ID" value="ABS44488.1"/>
    <property type="molecule type" value="Genomic_DNA"/>
</dbReference>
<dbReference type="SMR" id="A7H5I4"/>
<dbReference type="KEGG" id="cjd:JJD26997_1810"/>
<dbReference type="HOGENOM" id="CLU_045235_1_0_7"/>
<dbReference type="Proteomes" id="UP000002302">
    <property type="component" value="Chromosome"/>
</dbReference>
<dbReference type="GO" id="GO:0009428">
    <property type="term" value="C:bacterial-type flagellum basal body, distal rod, P ring"/>
    <property type="evidence" value="ECO:0007669"/>
    <property type="project" value="InterPro"/>
</dbReference>
<dbReference type="GO" id="GO:0030288">
    <property type="term" value="C:outer membrane-bounded periplasmic space"/>
    <property type="evidence" value="ECO:0007669"/>
    <property type="project" value="InterPro"/>
</dbReference>
<dbReference type="GO" id="GO:0005198">
    <property type="term" value="F:structural molecule activity"/>
    <property type="evidence" value="ECO:0007669"/>
    <property type="project" value="InterPro"/>
</dbReference>
<dbReference type="GO" id="GO:0071973">
    <property type="term" value="P:bacterial-type flagellum-dependent cell motility"/>
    <property type="evidence" value="ECO:0007669"/>
    <property type="project" value="InterPro"/>
</dbReference>
<dbReference type="HAMAP" id="MF_00416">
    <property type="entry name" value="FlgI"/>
    <property type="match status" value="1"/>
</dbReference>
<dbReference type="InterPro" id="IPR001782">
    <property type="entry name" value="Flag_FlgI"/>
</dbReference>
<dbReference type="NCBIfam" id="NF003676">
    <property type="entry name" value="PRK05303.1"/>
    <property type="match status" value="1"/>
</dbReference>
<dbReference type="PANTHER" id="PTHR30381">
    <property type="entry name" value="FLAGELLAR P-RING PERIPLASMIC PROTEIN FLGI"/>
    <property type="match status" value="1"/>
</dbReference>
<dbReference type="PANTHER" id="PTHR30381:SF0">
    <property type="entry name" value="FLAGELLAR P-RING PROTEIN"/>
    <property type="match status" value="1"/>
</dbReference>
<dbReference type="Pfam" id="PF02119">
    <property type="entry name" value="FlgI"/>
    <property type="match status" value="1"/>
</dbReference>
<dbReference type="PRINTS" id="PR01010">
    <property type="entry name" value="FLGPRINGFLGI"/>
</dbReference>
<proteinExistence type="inferred from homology"/>
<organism>
    <name type="scientific">Campylobacter jejuni subsp. doylei (strain ATCC BAA-1458 / RM4099 / 269.97)</name>
    <dbReference type="NCBI Taxonomy" id="360109"/>
    <lineage>
        <taxon>Bacteria</taxon>
        <taxon>Pseudomonadati</taxon>
        <taxon>Campylobacterota</taxon>
        <taxon>Epsilonproteobacteria</taxon>
        <taxon>Campylobacterales</taxon>
        <taxon>Campylobacteraceae</taxon>
        <taxon>Campylobacter</taxon>
    </lineage>
</organism>